<comment type="function">
    <text evidence="1">Catalyzes the base-exchange of a guanine (G) residue with the queuine precursor 7-aminomethyl-7-deazaguanine (PreQ1) at position 34 (anticodon wobble position) in tRNAs with GU(N) anticodons (tRNA-Asp, -Asn, -His and -Tyr). Catalysis occurs through a double-displacement mechanism. The nucleophile active site attacks the C1' of nucleotide 34 to detach the guanine base from the RNA, forming a covalent enzyme-RNA intermediate. The proton acceptor active site deprotonates the incoming PreQ1, allowing a nucleophilic attack on the C1' of the ribose to form the product. After dissociation, two additional enzymatic reactions on the tRNA convert PreQ1 to queuine (Q), resulting in the hypermodified nucleoside queuosine (7-(((4,5-cis-dihydroxy-2-cyclopenten-1-yl)amino)methyl)-7-deazaguanosine).</text>
</comment>
<comment type="catalytic activity">
    <reaction evidence="1">
        <text>7-aminomethyl-7-carbaguanine + guanosine(34) in tRNA = 7-aminomethyl-7-carbaguanosine(34) in tRNA + guanine</text>
        <dbReference type="Rhea" id="RHEA:24104"/>
        <dbReference type="Rhea" id="RHEA-COMP:10341"/>
        <dbReference type="Rhea" id="RHEA-COMP:10342"/>
        <dbReference type="ChEBI" id="CHEBI:16235"/>
        <dbReference type="ChEBI" id="CHEBI:58703"/>
        <dbReference type="ChEBI" id="CHEBI:74269"/>
        <dbReference type="ChEBI" id="CHEBI:82833"/>
        <dbReference type="EC" id="2.4.2.29"/>
    </reaction>
</comment>
<comment type="cofactor">
    <cofactor evidence="1">
        <name>Zn(2+)</name>
        <dbReference type="ChEBI" id="CHEBI:29105"/>
    </cofactor>
    <text evidence="1">Binds 1 zinc ion per subunit.</text>
</comment>
<comment type="pathway">
    <text evidence="1">tRNA modification; tRNA-queuosine biosynthesis.</text>
</comment>
<comment type="subunit">
    <text evidence="1">Homodimer. Within each dimer, one monomer is responsible for RNA recognition and catalysis, while the other monomer binds to the replacement base PreQ1.</text>
</comment>
<comment type="similarity">
    <text evidence="1">Belongs to the queuine tRNA-ribosyltransferase family.</text>
</comment>
<evidence type="ECO:0000255" key="1">
    <source>
        <dbReference type="HAMAP-Rule" id="MF_00168"/>
    </source>
</evidence>
<dbReference type="EC" id="2.4.2.29" evidence="1"/>
<dbReference type="EMBL" id="AE004969">
    <property type="protein sequence ID" value="AAW89042.1"/>
    <property type="molecule type" value="Genomic_DNA"/>
</dbReference>
<dbReference type="RefSeq" id="WP_010951022.1">
    <property type="nucleotide sequence ID" value="NC_002946.2"/>
</dbReference>
<dbReference type="RefSeq" id="YP_207454.1">
    <property type="nucleotide sequence ID" value="NC_002946.2"/>
</dbReference>
<dbReference type="SMR" id="Q5F9U5"/>
<dbReference type="STRING" id="242231.NGO_0294"/>
<dbReference type="KEGG" id="ngo:NGO_0294"/>
<dbReference type="PATRIC" id="fig|242231.10.peg.365"/>
<dbReference type="HOGENOM" id="CLU_022060_0_1_4"/>
<dbReference type="UniPathway" id="UPA00392"/>
<dbReference type="Proteomes" id="UP000000535">
    <property type="component" value="Chromosome"/>
</dbReference>
<dbReference type="GO" id="GO:0005829">
    <property type="term" value="C:cytosol"/>
    <property type="evidence" value="ECO:0007669"/>
    <property type="project" value="TreeGrafter"/>
</dbReference>
<dbReference type="GO" id="GO:0046872">
    <property type="term" value="F:metal ion binding"/>
    <property type="evidence" value="ECO:0007669"/>
    <property type="project" value="UniProtKB-KW"/>
</dbReference>
<dbReference type="GO" id="GO:0008479">
    <property type="term" value="F:tRNA-guanosine(34) queuine transglycosylase activity"/>
    <property type="evidence" value="ECO:0007669"/>
    <property type="project" value="UniProtKB-UniRule"/>
</dbReference>
<dbReference type="GO" id="GO:0008616">
    <property type="term" value="P:queuosine biosynthetic process"/>
    <property type="evidence" value="ECO:0007669"/>
    <property type="project" value="UniProtKB-UniRule"/>
</dbReference>
<dbReference type="GO" id="GO:0002099">
    <property type="term" value="P:tRNA wobble guanine modification"/>
    <property type="evidence" value="ECO:0007669"/>
    <property type="project" value="TreeGrafter"/>
</dbReference>
<dbReference type="GO" id="GO:0101030">
    <property type="term" value="P:tRNA-guanine transglycosylation"/>
    <property type="evidence" value="ECO:0007669"/>
    <property type="project" value="InterPro"/>
</dbReference>
<dbReference type="FunFam" id="3.20.20.105:FF:000001">
    <property type="entry name" value="Queuine tRNA-ribosyltransferase"/>
    <property type="match status" value="1"/>
</dbReference>
<dbReference type="Gene3D" id="3.20.20.105">
    <property type="entry name" value="Queuine tRNA-ribosyltransferase-like"/>
    <property type="match status" value="1"/>
</dbReference>
<dbReference type="HAMAP" id="MF_00168">
    <property type="entry name" value="Q_tRNA_Tgt"/>
    <property type="match status" value="1"/>
</dbReference>
<dbReference type="InterPro" id="IPR050076">
    <property type="entry name" value="ArchSynthase1/Queuine_TRR"/>
</dbReference>
<dbReference type="InterPro" id="IPR004803">
    <property type="entry name" value="TGT"/>
</dbReference>
<dbReference type="InterPro" id="IPR036511">
    <property type="entry name" value="TGT-like_sf"/>
</dbReference>
<dbReference type="InterPro" id="IPR002616">
    <property type="entry name" value="tRNA_ribo_trans-like"/>
</dbReference>
<dbReference type="NCBIfam" id="TIGR00430">
    <property type="entry name" value="Q_tRNA_tgt"/>
    <property type="match status" value="1"/>
</dbReference>
<dbReference type="NCBIfam" id="TIGR00449">
    <property type="entry name" value="tgt_general"/>
    <property type="match status" value="1"/>
</dbReference>
<dbReference type="PANTHER" id="PTHR46499">
    <property type="entry name" value="QUEUINE TRNA-RIBOSYLTRANSFERASE"/>
    <property type="match status" value="1"/>
</dbReference>
<dbReference type="PANTHER" id="PTHR46499:SF1">
    <property type="entry name" value="QUEUINE TRNA-RIBOSYLTRANSFERASE"/>
    <property type="match status" value="1"/>
</dbReference>
<dbReference type="Pfam" id="PF01702">
    <property type="entry name" value="TGT"/>
    <property type="match status" value="1"/>
</dbReference>
<dbReference type="SUPFAM" id="SSF51713">
    <property type="entry name" value="tRNA-guanine transglycosylase"/>
    <property type="match status" value="1"/>
</dbReference>
<sequence length="371" mass="41962">MLKFTLHKKDGLARRGTLELNHGKIETPVFMPVGTYGSVKAMNPQNLHDIKAQIILGNTYHLWLRPGLEVVEQFGGLHGFIGWDKPILTDSGGFQVFSLSDMRKLTEEGCTFKSPINGDKLFLSPEISMKIQTVLNSDIAMQLDECTPGETTREQARKSLQMSLRWAERSKKAFEDLKNPNALFGIVQGAMYEDLREESLRGLEEFDFPGLAVGGLSVGEPKPEMYRMLHAVGPMLPERKPHYLMGVGTPEDLVYGVAHGIDMFDCVMPTRNARNGWLFTRFGDLKIKNAKHKPDKRPIDESCTCYACQNFSRAYLHHLHRAGEILGAQLNTIHNLHFYQVIMAEMRDAVEQGKFADWQAQFHENRARGVD</sequence>
<keyword id="KW-0328">Glycosyltransferase</keyword>
<keyword id="KW-0479">Metal-binding</keyword>
<keyword id="KW-0671">Queuosine biosynthesis</keyword>
<keyword id="KW-1185">Reference proteome</keyword>
<keyword id="KW-0808">Transferase</keyword>
<keyword id="KW-0819">tRNA processing</keyword>
<keyword id="KW-0862">Zinc</keyword>
<gene>
    <name evidence="1" type="primary">tgt</name>
    <name type="ordered locus">NGO_0294</name>
</gene>
<name>TGT_NEIG1</name>
<organism>
    <name type="scientific">Neisseria gonorrhoeae (strain ATCC 700825 / FA 1090)</name>
    <dbReference type="NCBI Taxonomy" id="242231"/>
    <lineage>
        <taxon>Bacteria</taxon>
        <taxon>Pseudomonadati</taxon>
        <taxon>Pseudomonadota</taxon>
        <taxon>Betaproteobacteria</taxon>
        <taxon>Neisseriales</taxon>
        <taxon>Neisseriaceae</taxon>
        <taxon>Neisseria</taxon>
    </lineage>
</organism>
<proteinExistence type="inferred from homology"/>
<accession>Q5F9U5</accession>
<protein>
    <recommendedName>
        <fullName evidence="1">Queuine tRNA-ribosyltransferase</fullName>
        <ecNumber evidence="1">2.4.2.29</ecNumber>
    </recommendedName>
    <alternativeName>
        <fullName evidence="1">Guanine insertion enzyme</fullName>
    </alternativeName>
    <alternativeName>
        <fullName evidence="1">tRNA-guanine transglycosylase</fullName>
    </alternativeName>
</protein>
<reference key="1">
    <citation type="submission" date="2003-03" db="EMBL/GenBank/DDBJ databases">
        <title>The complete genome sequence of Neisseria gonorrhoeae.</title>
        <authorList>
            <person name="Lewis L.A."/>
            <person name="Gillaspy A.F."/>
            <person name="McLaughlin R.E."/>
            <person name="Gipson M."/>
            <person name="Ducey T.F."/>
            <person name="Ownbey T."/>
            <person name="Hartman K."/>
            <person name="Nydick C."/>
            <person name="Carson M.B."/>
            <person name="Vaughn J."/>
            <person name="Thomson C."/>
            <person name="Song L."/>
            <person name="Lin S."/>
            <person name="Yuan X."/>
            <person name="Najar F."/>
            <person name="Zhan M."/>
            <person name="Ren Q."/>
            <person name="Zhu H."/>
            <person name="Qi S."/>
            <person name="Kenton S.M."/>
            <person name="Lai H."/>
            <person name="White J.D."/>
            <person name="Clifton S."/>
            <person name="Roe B.A."/>
            <person name="Dyer D.W."/>
        </authorList>
    </citation>
    <scope>NUCLEOTIDE SEQUENCE [LARGE SCALE GENOMIC DNA]</scope>
    <source>
        <strain>ATCC 700825 / FA 1090</strain>
    </source>
</reference>
<feature type="chain" id="PRO_0000135494" description="Queuine tRNA-ribosyltransferase">
    <location>
        <begin position="1"/>
        <end position="371"/>
    </location>
</feature>
<feature type="region of interest" description="RNA binding" evidence="1">
    <location>
        <begin position="246"/>
        <end position="252"/>
    </location>
</feature>
<feature type="region of interest" description="RNA binding; important for wobble base 34 recognition" evidence="1">
    <location>
        <begin position="270"/>
        <end position="274"/>
    </location>
</feature>
<feature type="active site" description="Proton acceptor" evidence="1">
    <location>
        <position position="90"/>
    </location>
</feature>
<feature type="active site" description="Nucleophile" evidence="1">
    <location>
        <position position="265"/>
    </location>
</feature>
<feature type="binding site" evidence="1">
    <location>
        <begin position="90"/>
        <end position="94"/>
    </location>
    <ligand>
        <name>substrate</name>
    </ligand>
</feature>
<feature type="binding site" evidence="1">
    <location>
        <position position="144"/>
    </location>
    <ligand>
        <name>substrate</name>
    </ligand>
</feature>
<feature type="binding site" evidence="1">
    <location>
        <position position="188"/>
    </location>
    <ligand>
        <name>substrate</name>
    </ligand>
</feature>
<feature type="binding site" evidence="1">
    <location>
        <position position="215"/>
    </location>
    <ligand>
        <name>substrate</name>
    </ligand>
</feature>
<feature type="binding site" evidence="1">
    <location>
        <position position="303"/>
    </location>
    <ligand>
        <name>Zn(2+)</name>
        <dbReference type="ChEBI" id="CHEBI:29105"/>
    </ligand>
</feature>
<feature type="binding site" evidence="1">
    <location>
        <position position="305"/>
    </location>
    <ligand>
        <name>Zn(2+)</name>
        <dbReference type="ChEBI" id="CHEBI:29105"/>
    </ligand>
</feature>
<feature type="binding site" evidence="1">
    <location>
        <position position="308"/>
    </location>
    <ligand>
        <name>Zn(2+)</name>
        <dbReference type="ChEBI" id="CHEBI:29105"/>
    </ligand>
</feature>
<feature type="binding site" evidence="1">
    <location>
        <position position="334"/>
    </location>
    <ligand>
        <name>Zn(2+)</name>
        <dbReference type="ChEBI" id="CHEBI:29105"/>
    </ligand>
</feature>